<keyword id="KW-0325">Glycoprotein</keyword>
<keyword id="KW-0494">Milk protein</keyword>
<keyword id="KW-0597">Phosphoprotein</keyword>
<keyword id="KW-0964">Secreted</keyword>
<proteinExistence type="evidence at transcript level"/>
<evidence type="ECO:0000250" key="1"/>
<evidence type="ECO:0000250" key="2">
    <source>
        <dbReference type="UniProtKB" id="P02668"/>
    </source>
</evidence>
<evidence type="ECO:0000250" key="3">
    <source>
        <dbReference type="UniProtKB" id="P02670"/>
    </source>
</evidence>
<evidence type="ECO:0000256" key="4">
    <source>
        <dbReference type="SAM" id="MobiDB-lite"/>
    </source>
</evidence>
<evidence type="ECO:0000305" key="5"/>
<organism>
    <name type="scientific">Rucervus duvaucelii</name>
    <name type="common">Swamp deer</name>
    <name type="synonym">Cervus duvaucelii</name>
    <dbReference type="NCBI Taxonomy" id="43328"/>
    <lineage>
        <taxon>Eukaryota</taxon>
        <taxon>Metazoa</taxon>
        <taxon>Chordata</taxon>
        <taxon>Craniata</taxon>
        <taxon>Vertebrata</taxon>
        <taxon>Euteleostomi</taxon>
        <taxon>Mammalia</taxon>
        <taxon>Eutheria</taxon>
        <taxon>Laurasiatheria</taxon>
        <taxon>Artiodactyla</taxon>
        <taxon>Ruminantia</taxon>
        <taxon>Pecora</taxon>
        <taxon>Cervidae</taxon>
        <taxon>Cervinae</taxon>
        <taxon>Rucervus</taxon>
    </lineage>
</organism>
<accession>Q95147</accession>
<protein>
    <recommendedName>
        <fullName>Kappa-casein</fullName>
    </recommendedName>
</protein>
<reference key="1">
    <citation type="journal article" date="1996" name="Mol. Phylogenet. Evol.">
        <title>K-casein gene phylogeny of higher ruminants (Pecora, Artiodactyla).</title>
        <authorList>
            <person name="Cronin M.A."/>
            <person name="Stuart R."/>
            <person name="Pierson B.J."/>
            <person name="Patton J.C."/>
        </authorList>
    </citation>
    <scope>NUCLEOTIDE SEQUENCE [GENOMIC DNA]</scope>
</reference>
<feature type="chain" id="PRO_0000144105" description="Kappa-casein">
    <location>
        <begin position="1" status="less than"/>
        <end position="122"/>
    </location>
</feature>
<feature type="region of interest" description="Disordered" evidence="4">
    <location>
        <begin position="102"/>
        <end position="122"/>
    </location>
</feature>
<feature type="site" description="Cleavage; by chymosin/rennin" evidence="1">
    <location>
        <begin position="58"/>
        <end position="59"/>
    </location>
</feature>
<feature type="modified residue" description="Phosphothreonine" evidence="2">
    <location>
        <position position="98"/>
    </location>
</feature>
<feature type="modified residue" description="Phosphoserine; alternate" evidence="2">
    <location>
        <position position="102"/>
    </location>
</feature>
<feature type="modified residue" description="Phosphoserine" evidence="3">
    <location>
        <position position="119"/>
    </location>
</feature>
<feature type="glycosylation site" description="O-linked (GalNAc...) threonine" evidence="2">
    <location>
        <position position="84"/>
    </location>
</feature>
<feature type="glycosylation site" description="O-linked (GalNAc...) threonine" evidence="2">
    <location>
        <position position="86"/>
    </location>
</feature>
<feature type="glycosylation site" description="O-linked (GalNAc...) threonine" evidence="2">
    <location>
        <position position="89"/>
    </location>
</feature>
<feature type="glycosylation site" description="O-linked (GalNAc...) threonine" evidence="2">
    <location>
        <position position="95"/>
    </location>
</feature>
<feature type="glycosylation site" description="O-linked (GalNAc...) serine; alternate" evidence="2">
    <location>
        <position position="102"/>
    </location>
</feature>
<feature type="glycosylation site" description="O-linked (GalNAc...) threonine" evidence="2">
    <location>
        <position position="118"/>
    </location>
</feature>
<feature type="non-terminal residue">
    <location>
        <position position="1"/>
    </location>
</feature>
<gene>
    <name type="primary">CSN3</name>
    <name type="synonym">CSN10</name>
    <name type="synonym">CSNK</name>
</gene>
<name>CASK_RUCDU</name>
<sequence length="122" mass="13209">VALINNQFLPYPYYAKPGAVRSPAQILQWQVLPNTVSARSCQAQPTTMARHPHPHLSFMAIPPKKNQDKTDIPSINTIATAESTITPTTEVIVNTVATQEASSEVIESAPEAKTDQVTSTVV</sequence>
<dbReference type="EMBL" id="U37507">
    <property type="protein sequence ID" value="AAC48651.1"/>
    <property type="molecule type" value="Genomic_DNA"/>
</dbReference>
<dbReference type="GlyCosmos" id="Q95147">
    <property type="glycosylation" value="6 sites, No reported glycans"/>
</dbReference>
<dbReference type="GO" id="GO:0005615">
    <property type="term" value="C:extracellular space"/>
    <property type="evidence" value="ECO:0007669"/>
    <property type="project" value="TreeGrafter"/>
</dbReference>
<dbReference type="GO" id="GO:0007595">
    <property type="term" value="P:lactation"/>
    <property type="evidence" value="ECO:0007669"/>
    <property type="project" value="TreeGrafter"/>
</dbReference>
<dbReference type="GO" id="GO:0050821">
    <property type="term" value="P:protein stabilization"/>
    <property type="evidence" value="ECO:0007669"/>
    <property type="project" value="TreeGrafter"/>
</dbReference>
<dbReference type="InterPro" id="IPR000117">
    <property type="entry name" value="Casein_kappa"/>
</dbReference>
<dbReference type="PANTHER" id="PTHR11470">
    <property type="entry name" value="KAPPA CASEIN"/>
    <property type="match status" value="1"/>
</dbReference>
<dbReference type="PANTHER" id="PTHR11470:SF2">
    <property type="entry name" value="KAPPA-CASEIN"/>
    <property type="match status" value="1"/>
</dbReference>
<dbReference type="Pfam" id="PF00997">
    <property type="entry name" value="Casein_kappa"/>
    <property type="match status" value="1"/>
</dbReference>
<comment type="function">
    <text>Kappa-casein stabilizes micelle formation, preventing casein precipitation in milk.</text>
</comment>
<comment type="subcellular location">
    <subcellularLocation>
        <location>Secreted</location>
    </subcellularLocation>
</comment>
<comment type="tissue specificity">
    <text>Mammary gland specific. Secreted in milk.</text>
</comment>
<comment type="similarity">
    <text evidence="5">Belongs to the kappa-casein family.</text>
</comment>